<gene>
    <name type="primary">SLC35G5</name>
    <name type="synonym">AMAC1L2</name>
</gene>
<evidence type="ECO:0000255" key="1"/>
<evidence type="ECO:0000256" key="2">
    <source>
        <dbReference type="SAM" id="MobiDB-lite"/>
    </source>
</evidence>
<evidence type="ECO:0000305" key="3"/>
<protein>
    <recommendedName>
        <fullName>Solute carrier family 35 member G5</fullName>
    </recommendedName>
    <alternativeName>
        <fullName>Acyl-malonyl-condensing enzyme 1-like protein 2</fullName>
    </alternativeName>
</protein>
<feature type="chain" id="PRO_0000269557" description="Solute carrier family 35 member G5">
    <location>
        <begin position="1"/>
        <end position="338"/>
    </location>
</feature>
<feature type="transmembrane region" description="Helical" evidence="1">
    <location>
        <begin position="37"/>
        <end position="57"/>
    </location>
</feature>
<feature type="transmembrane region" description="Helical" evidence="1">
    <location>
        <begin position="67"/>
        <end position="87"/>
    </location>
</feature>
<feature type="transmembrane region" description="Helical" evidence="1">
    <location>
        <begin position="105"/>
        <end position="125"/>
    </location>
</feature>
<feature type="transmembrane region" description="Helical" evidence="1">
    <location>
        <begin position="160"/>
        <end position="180"/>
    </location>
</feature>
<feature type="transmembrane region" description="Helical" evidence="1">
    <location>
        <begin position="190"/>
        <end position="210"/>
    </location>
</feature>
<feature type="transmembrane region" description="Helical" evidence="1">
    <location>
        <begin position="221"/>
        <end position="241"/>
    </location>
</feature>
<feature type="transmembrane region" description="Helical" evidence="1">
    <location>
        <begin position="250"/>
        <end position="270"/>
    </location>
</feature>
<feature type="transmembrane region" description="Helical" evidence="1">
    <location>
        <begin position="281"/>
        <end position="301"/>
    </location>
</feature>
<feature type="transmembrane region" description="Helical" evidence="1">
    <location>
        <begin position="305"/>
        <end position="325"/>
    </location>
</feature>
<feature type="domain" description="EamA 1">
    <location>
        <begin position="49"/>
        <end position="174"/>
    </location>
</feature>
<feature type="domain" description="EamA 2">
    <location>
        <begin position="272"/>
        <end position="325"/>
    </location>
</feature>
<feature type="region of interest" description="Disordered" evidence="2">
    <location>
        <begin position="1"/>
        <end position="21"/>
    </location>
</feature>
<reference key="1">
    <citation type="journal article" date="2006" name="Proc. Natl. Acad. Sci. U.S.A.">
        <title>Emergence of primate genes by retrotransposon-mediated sequence transduction.</title>
        <authorList>
            <person name="Xing J."/>
            <person name="Wang H."/>
            <person name="Belancio V.P."/>
            <person name="Cordaux R."/>
            <person name="Deininger P.L."/>
            <person name="Batzer M.A."/>
        </authorList>
    </citation>
    <scope>NUCLEOTIDE SEQUENCE [GENOMIC DNA]</scope>
</reference>
<proteinExistence type="inferred from homology"/>
<organism>
    <name type="scientific">Pan paniscus</name>
    <name type="common">Pygmy chimpanzee</name>
    <name type="synonym">Bonobo</name>
    <dbReference type="NCBI Taxonomy" id="9597"/>
    <lineage>
        <taxon>Eukaryota</taxon>
        <taxon>Metazoa</taxon>
        <taxon>Chordata</taxon>
        <taxon>Craniata</taxon>
        <taxon>Vertebrata</taxon>
        <taxon>Euteleostomi</taxon>
        <taxon>Mammalia</taxon>
        <taxon>Eutheria</taxon>
        <taxon>Euarchontoglires</taxon>
        <taxon>Primates</taxon>
        <taxon>Haplorrhini</taxon>
        <taxon>Catarrhini</taxon>
        <taxon>Hominidae</taxon>
        <taxon>Pan</taxon>
    </lineage>
</organism>
<accession>Q0Q7U9</accession>
<comment type="subcellular location">
    <subcellularLocation>
        <location evidence="3">Membrane</location>
        <topology evidence="3">Multi-pass membrane protein</topology>
    </subcellularLocation>
</comment>
<comment type="miscellaneous">
    <text>The gene encoding this protein appears to have arisen by SVA-mediated retrotransposition of the SLC35G6 gene in the primate lineage.</text>
</comment>
<comment type="similarity">
    <text evidence="3">Belongs to the SLC35G solute transporter family.</text>
</comment>
<dbReference type="EMBL" id="DQ482912">
    <property type="protein sequence ID" value="ABE68915.1"/>
    <property type="molecule type" value="Genomic_DNA"/>
</dbReference>
<dbReference type="SMR" id="Q0Q7U9"/>
<dbReference type="eggNOG" id="ENOG502RCFC">
    <property type="taxonomic scope" value="Eukaryota"/>
</dbReference>
<dbReference type="Proteomes" id="UP000240080">
    <property type="component" value="Unplaced"/>
</dbReference>
<dbReference type="GO" id="GO:0016020">
    <property type="term" value="C:membrane"/>
    <property type="evidence" value="ECO:0007669"/>
    <property type="project" value="UniProtKB-SubCell"/>
</dbReference>
<dbReference type="InterPro" id="IPR000620">
    <property type="entry name" value="EamA_dom"/>
</dbReference>
<dbReference type="PANTHER" id="PTHR22911">
    <property type="entry name" value="ACYL-MALONYL CONDENSING ENZYME-RELATED"/>
    <property type="match status" value="1"/>
</dbReference>
<dbReference type="PANTHER" id="PTHR22911:SF32">
    <property type="entry name" value="SOLUTE CARRIER FAMILY 35 MEMBER G5-RELATED"/>
    <property type="match status" value="1"/>
</dbReference>
<dbReference type="Pfam" id="PF00892">
    <property type="entry name" value="EamA"/>
    <property type="match status" value="2"/>
</dbReference>
<dbReference type="SUPFAM" id="SSF103481">
    <property type="entry name" value="Multidrug resistance efflux transporter EmrE"/>
    <property type="match status" value="2"/>
</dbReference>
<name>S35G5_PANPA</name>
<sequence>MAGSHPYFNLPDSTHPSPPSAPPSLRWCQRCQPSDATNGLLVALLGGGLPAGFVGPLSRMAYQASNLPSLELLICRCLFHLPIALPLKLRGDPLLGPPDIRGRACFCALLNVLSIGCAYSAVQVVPAGNAATVRKGSSTVCSAILTLCLESQGLSGYDWCGLLGSILGLIIIVGPGLWTLQEGTMGVYTALGYVQAFLGGLALSLGLLVYRSLHFPSCLPTVAFLFGLVGLLGFVPGLFVLQTPVLPSDLLSWSCVGAVGILALVSFTCVGYAVTKAHPALVCAVLHSEVVVALILQYYVLHETVAPFDITGAGIVLGSIAIITARNLSCERTGKVEE</sequence>
<keyword id="KW-0472">Membrane</keyword>
<keyword id="KW-1185">Reference proteome</keyword>
<keyword id="KW-0677">Repeat</keyword>
<keyword id="KW-0812">Transmembrane</keyword>
<keyword id="KW-1133">Transmembrane helix</keyword>